<protein>
    <recommendedName>
        <fullName evidence="4">Dimethylsulfoniopropionate lyase</fullName>
        <shortName evidence="4">DMSP lyase</shortName>
        <ecNumber evidence="2">4.4.1.3</ecNumber>
    </recommendedName>
    <alternativeName>
        <fullName evidence="3">Symbiodinium-A1</fullName>
    </alternativeName>
</protein>
<keyword id="KW-0456">Lyase</keyword>
<feature type="chain" id="PRO_0000433887" description="Dimethylsulfoniopropionate lyase">
    <location>
        <begin position="1"/>
        <end position="301"/>
    </location>
</feature>
<feature type="active site" description="Proton donor/acceptor" evidence="1">
    <location>
        <position position="111"/>
    </location>
</feature>
<feature type="active site" description="Proton donor/acceptor" evidence="1">
    <location>
        <position position="230"/>
    </location>
</feature>
<proteinExistence type="evidence at protein level"/>
<name>ALMA1_DURXX</name>
<gene>
    <name evidence="3" type="primary">ALMA1</name>
</gene>
<comment type="function">
    <text evidence="2">Mediates cleavage of dimethylsulfoniopropionate (DMSP) into dimethyl sulfide (DMS) and acrylate. DMS is the principal form by which sulfur is transported from oceans to the atmosphere and is a key component of the ocean sulfur cycle.</text>
</comment>
<comment type="catalytic activity">
    <reaction evidence="1">
        <text>S,S-dimethyl-beta-propiothetin = acrylate + dimethyl sulfide + H(+)</text>
        <dbReference type="Rhea" id="RHEA:19965"/>
        <dbReference type="ChEBI" id="CHEBI:15378"/>
        <dbReference type="ChEBI" id="CHEBI:16457"/>
        <dbReference type="ChEBI" id="CHEBI:17437"/>
        <dbReference type="ChEBI" id="CHEBI:37080"/>
        <dbReference type="EC" id="4.4.1.3"/>
    </reaction>
</comment>
<comment type="subunit">
    <text evidence="1">Homotetramer.</text>
</comment>
<comment type="induction">
    <text evidence="2">Expressed at low level.</text>
</comment>
<comment type="miscellaneous">
    <text evidence="5">At least 10 million metric tons of volatile dimethyl sulfide (DMS) are released into the atmosphere annually by the dimethylsulfoniopropionate lyase in oceans. It is a component of the tangy aroma of the seaside and functions as a chemical attractant that guides various marine animals, such as sea birds, invertebrates, and some mammals, toward potential food supplies. DMS oxidation products act as condensation nuclei, causing water molecules to coalesce, with possible effects on local climate through enhanced cloud formation.</text>
</comment>
<comment type="similarity">
    <text evidence="4">Belongs to the aspartate/glutamate racemases family. ALMA1 subfamily.</text>
</comment>
<reference key="1">
    <citation type="journal article" date="2015" name="Science">
        <title>Identification of the algal dimethyl sulfide-releasing enzyme: A missing link in the marine sulfur cycle.</title>
        <authorList>
            <person name="Alcolombri U."/>
            <person name="Ben-Dor S."/>
            <person name="Feldmesser E."/>
            <person name="Levin Y."/>
            <person name="Tawfik D.S."/>
            <person name="Vardi A."/>
        </authorList>
    </citation>
    <scope>IDENTIFICATION</scope>
    <scope>FUNCTION</scope>
    <scope>CATALYTIC ACTIVITY</scope>
    <scope>INDUCTION</scope>
</reference>
<organism>
    <name type="scientific">Durusdinium sp. clade D</name>
    <name type="common">Symbiodinium sp. clade D</name>
    <dbReference type="NCBI Taxonomy" id="298137"/>
    <lineage>
        <taxon>Eukaryota</taxon>
        <taxon>Sar</taxon>
        <taxon>Alveolata</taxon>
        <taxon>Dinophyceae</taxon>
        <taxon>Suessiales</taxon>
        <taxon>Symbiodiniaceae</taxon>
        <taxon>Symbiodinium</taxon>
    </lineage>
</organism>
<accession>P0DN22</accession>
<evidence type="ECO:0000250" key="1">
    <source>
        <dbReference type="UniProtKB" id="P0DN21"/>
    </source>
</evidence>
<evidence type="ECO:0000269" key="2">
    <source>
    </source>
</evidence>
<evidence type="ECO:0000303" key="3">
    <source>
    </source>
</evidence>
<evidence type="ECO:0000305" key="4"/>
<evidence type="ECO:0000305" key="5">
    <source>
    </source>
</evidence>
<dbReference type="EC" id="4.4.1.3" evidence="2"/>
<dbReference type="SMR" id="P0DN22"/>
<dbReference type="GO" id="GO:0047869">
    <property type="term" value="F:dimethylpropiothetin dethiomethylase activity"/>
    <property type="evidence" value="ECO:0000314"/>
    <property type="project" value="UniProtKB"/>
</dbReference>
<dbReference type="GO" id="GO:0016855">
    <property type="term" value="F:racemase and epimerase activity, acting on amino acids and derivatives"/>
    <property type="evidence" value="ECO:0007669"/>
    <property type="project" value="InterPro"/>
</dbReference>
<dbReference type="Gene3D" id="3.40.50.1860">
    <property type="match status" value="1"/>
</dbReference>
<dbReference type="InterPro" id="IPR001920">
    <property type="entry name" value="Asp/Glu_race"/>
</dbReference>
<sequence>MPLILGGLAGAAAGYGAAAWLERRKPPPGKDPNIKHASLGVVRLDWHYHPLPGDVGSPDSFEYPVYYRAVPGLTFEICQSGKMSPEIQQNFKDAIEFLDKERGVSVITSDCGFFMWFQKEARLYTSKPVVMSSLALLPSLHAAIGTDGKIAIFSANSTSLGPMHDTVAKECGVDWDEACYVLVGCQDVEGFEAVASGEPLDLEKVTPGIVRKAKQVIAEHPDIHAILMECTQLPPFSDDVRAATGLPVYDAIVSADFFIRGFVDNPRFGLNDWHRPWDGHQEKYKLGDNVQDKEKLLHYKP</sequence>